<organism>
    <name type="scientific">Emericella nidulans (strain FGSC A4 / ATCC 38163 / CBS 112.46 / NRRL 194 / M139)</name>
    <name type="common">Aspergillus nidulans</name>
    <dbReference type="NCBI Taxonomy" id="227321"/>
    <lineage>
        <taxon>Eukaryota</taxon>
        <taxon>Fungi</taxon>
        <taxon>Dikarya</taxon>
        <taxon>Ascomycota</taxon>
        <taxon>Pezizomycotina</taxon>
        <taxon>Eurotiomycetes</taxon>
        <taxon>Eurotiomycetidae</taxon>
        <taxon>Eurotiales</taxon>
        <taxon>Aspergillaceae</taxon>
        <taxon>Aspergillus</taxon>
        <taxon>Aspergillus subgen. Nidulantes</taxon>
    </lineage>
</organism>
<comment type="function">
    <text>Required for high-affinity proline transport.</text>
</comment>
<comment type="subcellular location">
    <subcellularLocation>
        <location>Membrane</location>
        <topology>Multi-pass membrane protein</topology>
    </subcellularLocation>
</comment>
<comment type="induction">
    <text>By L-proline.</text>
</comment>
<comment type="similarity">
    <text evidence="3">Belongs to the amino acid-polyamine-organocation (APC) superfamily. YAT (TC 2.A.3.10) family.</text>
</comment>
<comment type="sequence caution" evidence="3">
    <conflict type="erroneous gene model prediction">
        <sequence resource="EMBL-CDS" id="CBF85456"/>
    </conflict>
</comment>
<comment type="sequence caution" evidence="3">
    <conflict type="erroneous gene model prediction">
        <sequence resource="EMBL-CDS" id="EAA64018"/>
    </conflict>
</comment>
<evidence type="ECO:0000255" key="1"/>
<evidence type="ECO:0000256" key="2">
    <source>
        <dbReference type="SAM" id="MobiDB-lite"/>
    </source>
</evidence>
<evidence type="ECO:0000305" key="3"/>
<name>PUTX_EMENI</name>
<feature type="chain" id="PRO_0000054159" description="Proline-specific permease">
    <location>
        <begin position="1"/>
        <end position="550"/>
    </location>
</feature>
<feature type="topological domain" description="Cytoplasmic" evidence="1">
    <location>
        <begin position="1"/>
        <end position="47"/>
    </location>
</feature>
<feature type="transmembrane region" description="Helical" evidence="1">
    <location>
        <begin position="48"/>
        <end position="68"/>
    </location>
</feature>
<feature type="topological domain" description="Extracellular" evidence="1">
    <location>
        <begin position="69"/>
        <end position="72"/>
    </location>
</feature>
<feature type="transmembrane region" description="Helical" evidence="1">
    <location>
        <begin position="73"/>
        <end position="93"/>
    </location>
</feature>
<feature type="topological domain" description="Cytoplasmic" evidence="1">
    <location>
        <begin position="94"/>
        <end position="126"/>
    </location>
</feature>
<feature type="transmembrane region" description="Helical" evidence="1">
    <location>
        <begin position="127"/>
        <end position="147"/>
    </location>
</feature>
<feature type="topological domain" description="Extracellular" evidence="1">
    <location>
        <begin position="148"/>
        <end position="152"/>
    </location>
</feature>
<feature type="transmembrane region" description="Helical" evidence="1">
    <location>
        <begin position="153"/>
        <end position="173"/>
    </location>
</feature>
<feature type="topological domain" description="Cytoplasmic" evidence="1">
    <location>
        <begin position="174"/>
        <end position="183"/>
    </location>
</feature>
<feature type="transmembrane region" description="Helical" evidence="1">
    <location>
        <begin position="184"/>
        <end position="204"/>
    </location>
</feature>
<feature type="topological domain" description="Extracellular" evidence="1">
    <location>
        <begin position="205"/>
        <end position="236"/>
    </location>
</feature>
<feature type="transmembrane region" description="Helical" evidence="1">
    <location>
        <begin position="237"/>
        <end position="257"/>
    </location>
</feature>
<feature type="topological domain" description="Cytoplasmic" evidence="1">
    <location>
        <begin position="258"/>
        <end position="277"/>
    </location>
</feature>
<feature type="transmembrane region" description="Helical" evidence="1">
    <location>
        <begin position="278"/>
        <end position="298"/>
    </location>
</feature>
<feature type="topological domain" description="Extracellular" evidence="1">
    <location>
        <begin position="299"/>
        <end position="321"/>
    </location>
</feature>
<feature type="transmembrane region" description="Helical" evidence="1">
    <location>
        <begin position="322"/>
        <end position="342"/>
    </location>
</feature>
<feature type="topological domain" description="Cytoplasmic" evidence="1">
    <location>
        <begin position="343"/>
        <end position="378"/>
    </location>
</feature>
<feature type="transmembrane region" description="Helical" evidence="1">
    <location>
        <begin position="379"/>
        <end position="399"/>
    </location>
</feature>
<feature type="topological domain" description="Extracellular" evidence="1">
    <location>
        <begin position="400"/>
        <end position="406"/>
    </location>
</feature>
<feature type="transmembrane region" description="Helical" evidence="1">
    <location>
        <begin position="407"/>
        <end position="427"/>
    </location>
</feature>
<feature type="topological domain" description="Cytoplasmic" evidence="1">
    <location>
        <begin position="428"/>
        <end position="457"/>
    </location>
</feature>
<feature type="transmembrane region" description="Helical" evidence="1">
    <location>
        <begin position="458"/>
        <end position="478"/>
    </location>
</feature>
<feature type="topological domain" description="Extracellular" evidence="1">
    <location>
        <begin position="479"/>
        <end position="484"/>
    </location>
</feature>
<feature type="transmembrane region" description="Helical" evidence="1">
    <location>
        <begin position="485"/>
        <end position="505"/>
    </location>
</feature>
<feature type="topological domain" description="Cytoplasmic" evidence="1">
    <location>
        <begin position="506"/>
        <end position="550"/>
    </location>
</feature>
<feature type="region of interest" description="Disordered" evidence="2">
    <location>
        <begin position="1"/>
        <end position="24"/>
    </location>
</feature>
<accession>P18696</accession>
<accession>C8VP33</accession>
<accession>Q5BCJ8</accession>
<accession>Q92202</accession>
<protein>
    <recommendedName>
        <fullName>Proline-specific permease</fullName>
    </recommendedName>
    <alternativeName>
        <fullName>Proline transport protein</fullName>
    </alternativeName>
</protein>
<gene>
    <name type="primary">prnB</name>
    <name type="ORF">AN1732</name>
</gene>
<sequence>MSPPSAKSMEEGRTPSVQYGYGDPKTLEGEIEEHTATKRGLSSRQLQLLAIGGCIGTGLFVGTSTVLTQTGPAPLLMSYIVMASIVWFVMNVLGEMTTYLPIRGVSVPYLIGRFTEPSIGFASGYNYWYSFAMLLASEVTASGLIIEYWNPPVSVGLWIAIVLVVILALNVFAVEWYGESEFWFAGLKILAIIGLIILGVVLFFGGGPNHDRLGFRYWQDPGAFNPYLVPGDTGKFLGFWTALIKSGFSFIFSPELITTAAGEVEAPRRNIPKATKRFIYRVFTFYILGSLVIGVTVAYNDPTLEAGVESGGSGAGASPFVVAIQNAGIGGLNHVVNAAILISAWSSGNAWCYAGSRTLYSLAGEGQAPKIFTRTNRTGVPYVAVLATWTIGLLSFLNLSSSGQTVFYWFTNITTVGGFINWVLIGIAYLRFRKALQFHGMLDMLPFKTPLQPYGTYYVMFIISILTLTNGYAVFFPGRFTASDFLVSYIVFAIFLALYAGHKIWYRTPWLTKVSEVDIFTGKDEIDRLCENDMERQPRNWLERVWWWIF</sequence>
<dbReference type="EMBL" id="X79797">
    <property type="protein sequence ID" value="CAA56191.1"/>
    <property type="molecule type" value="Genomic_DNA"/>
</dbReference>
<dbReference type="EMBL" id="AACD01000027">
    <property type="protein sequence ID" value="EAA64018.1"/>
    <property type="status" value="ALT_SEQ"/>
    <property type="molecule type" value="Genomic_DNA"/>
</dbReference>
<dbReference type="EMBL" id="BN001307">
    <property type="protein sequence ID" value="CBF85456.1"/>
    <property type="status" value="ALT_SEQ"/>
    <property type="molecule type" value="Genomic_DNA"/>
</dbReference>
<dbReference type="PIR" id="S04547">
    <property type="entry name" value="S04547"/>
</dbReference>
<dbReference type="RefSeq" id="XP_659336.1">
    <property type="nucleotide sequence ID" value="XM_654244.1"/>
</dbReference>
<dbReference type="SMR" id="P18696"/>
<dbReference type="FunCoup" id="P18696">
    <property type="interactions" value="134"/>
</dbReference>
<dbReference type="STRING" id="227321.P18696"/>
<dbReference type="GeneID" id="2875279"/>
<dbReference type="KEGG" id="ani:ANIA_01732"/>
<dbReference type="eggNOG" id="KOG1286">
    <property type="taxonomic scope" value="Eukaryota"/>
</dbReference>
<dbReference type="HOGENOM" id="CLU_007946_12_1_1"/>
<dbReference type="InParanoid" id="P18696"/>
<dbReference type="OrthoDB" id="3900342at2759"/>
<dbReference type="Proteomes" id="UP000000560">
    <property type="component" value="Chromosome VII"/>
</dbReference>
<dbReference type="GO" id="GO:0016020">
    <property type="term" value="C:membrane"/>
    <property type="evidence" value="ECO:0000318"/>
    <property type="project" value="GO_Central"/>
</dbReference>
<dbReference type="GO" id="GO:0015171">
    <property type="term" value="F:amino acid transmembrane transporter activity"/>
    <property type="evidence" value="ECO:0000318"/>
    <property type="project" value="GO_Central"/>
</dbReference>
<dbReference type="GO" id="GO:0003333">
    <property type="term" value="P:amino acid transmembrane transport"/>
    <property type="evidence" value="ECO:0000318"/>
    <property type="project" value="GO_Central"/>
</dbReference>
<dbReference type="FunFam" id="1.20.1740.10:FF:000006">
    <property type="entry name" value="General amino acid permease"/>
    <property type="match status" value="1"/>
</dbReference>
<dbReference type="Gene3D" id="1.20.1740.10">
    <property type="entry name" value="Amino acid/polyamine transporter I"/>
    <property type="match status" value="1"/>
</dbReference>
<dbReference type="InterPro" id="IPR004841">
    <property type="entry name" value="AA-permease/SLC12A_dom"/>
</dbReference>
<dbReference type="InterPro" id="IPR004840">
    <property type="entry name" value="Amino_acid_permease_CS"/>
</dbReference>
<dbReference type="InterPro" id="IPR050524">
    <property type="entry name" value="APC_YAT"/>
</dbReference>
<dbReference type="PANTHER" id="PTHR43341">
    <property type="entry name" value="AMINO ACID PERMEASE"/>
    <property type="match status" value="1"/>
</dbReference>
<dbReference type="PANTHER" id="PTHR43341:SF36">
    <property type="entry name" value="PROLINE-SPECIFIC PERMEASE"/>
    <property type="match status" value="1"/>
</dbReference>
<dbReference type="Pfam" id="PF00324">
    <property type="entry name" value="AA_permease"/>
    <property type="match status" value="1"/>
</dbReference>
<dbReference type="PIRSF" id="PIRSF006060">
    <property type="entry name" value="AA_transporter"/>
    <property type="match status" value="1"/>
</dbReference>
<dbReference type="PROSITE" id="PS00218">
    <property type="entry name" value="AMINO_ACID_PERMEASE_1"/>
    <property type="match status" value="1"/>
</dbReference>
<keyword id="KW-0029">Amino-acid transport</keyword>
<keyword id="KW-0472">Membrane</keyword>
<keyword id="KW-1185">Reference proteome</keyword>
<keyword id="KW-0812">Transmembrane</keyword>
<keyword id="KW-1133">Transmembrane helix</keyword>
<keyword id="KW-0813">Transport</keyword>
<proteinExistence type="evidence at transcript level"/>
<reference key="1">
    <citation type="journal article" date="1989" name="Mol. Microbiol.">
        <title>The proline transport protein of Aspergillus nidulans is very similar to amino acid transporters of Saccharomyces cerevisiae.</title>
        <authorList>
            <person name="Sophianopoulou V."/>
            <person name="Scazzocchio C."/>
        </authorList>
    </citation>
    <scope>NUCLEOTIDE SEQUENCE [GENOMIC DNA]</scope>
    <source>
        <strain>pabaA1</strain>
    </source>
</reference>
<reference key="2">
    <citation type="submission" date="1996-04" db="EMBL/GenBank/DDBJ databases">
        <authorList>
            <person name="Tazebay U."/>
        </authorList>
    </citation>
    <scope>SEQUENCE REVISION</scope>
</reference>
<reference key="3">
    <citation type="journal article" date="2005" name="Nature">
        <title>Sequencing of Aspergillus nidulans and comparative analysis with A. fumigatus and A. oryzae.</title>
        <authorList>
            <person name="Galagan J.E."/>
            <person name="Calvo S.E."/>
            <person name="Cuomo C."/>
            <person name="Ma L.-J."/>
            <person name="Wortman J.R."/>
            <person name="Batzoglou S."/>
            <person name="Lee S.-I."/>
            <person name="Bastuerkmen M."/>
            <person name="Spevak C.C."/>
            <person name="Clutterbuck J."/>
            <person name="Kapitonov V."/>
            <person name="Jurka J."/>
            <person name="Scazzocchio C."/>
            <person name="Farman M.L."/>
            <person name="Butler J."/>
            <person name="Purcell S."/>
            <person name="Harris S."/>
            <person name="Braus G.H."/>
            <person name="Draht O."/>
            <person name="Busch S."/>
            <person name="D'Enfert C."/>
            <person name="Bouchier C."/>
            <person name="Goldman G.H."/>
            <person name="Bell-Pedersen D."/>
            <person name="Griffiths-Jones S."/>
            <person name="Doonan J.H."/>
            <person name="Yu J."/>
            <person name="Vienken K."/>
            <person name="Pain A."/>
            <person name="Freitag M."/>
            <person name="Selker E.U."/>
            <person name="Archer D.B."/>
            <person name="Penalva M.A."/>
            <person name="Oakley B.R."/>
            <person name="Momany M."/>
            <person name="Tanaka T."/>
            <person name="Kumagai T."/>
            <person name="Asai K."/>
            <person name="Machida M."/>
            <person name="Nierman W.C."/>
            <person name="Denning D.W."/>
            <person name="Caddick M.X."/>
            <person name="Hynes M."/>
            <person name="Paoletti M."/>
            <person name="Fischer R."/>
            <person name="Miller B.L."/>
            <person name="Dyer P.S."/>
            <person name="Sachs M.S."/>
            <person name="Osmani S.A."/>
            <person name="Birren B.W."/>
        </authorList>
    </citation>
    <scope>NUCLEOTIDE SEQUENCE [LARGE SCALE GENOMIC DNA]</scope>
    <source>
        <strain>FGSC A4 / ATCC 38163 / CBS 112.46 / NRRL 194 / M139</strain>
    </source>
</reference>
<reference key="4">
    <citation type="journal article" date="2009" name="Fungal Genet. Biol.">
        <title>The 2008 update of the Aspergillus nidulans genome annotation: a community effort.</title>
        <authorList>
            <person name="Wortman J.R."/>
            <person name="Gilsenan J.M."/>
            <person name="Joardar V."/>
            <person name="Deegan J."/>
            <person name="Clutterbuck J."/>
            <person name="Andersen M.R."/>
            <person name="Archer D."/>
            <person name="Bencina M."/>
            <person name="Braus G."/>
            <person name="Coutinho P."/>
            <person name="von Dohren H."/>
            <person name="Doonan J."/>
            <person name="Driessen A.J."/>
            <person name="Durek P."/>
            <person name="Espeso E."/>
            <person name="Fekete E."/>
            <person name="Flipphi M."/>
            <person name="Estrada C.G."/>
            <person name="Geysens S."/>
            <person name="Goldman G."/>
            <person name="de Groot P.W."/>
            <person name="Hansen K."/>
            <person name="Harris S.D."/>
            <person name="Heinekamp T."/>
            <person name="Helmstaedt K."/>
            <person name="Henrissat B."/>
            <person name="Hofmann G."/>
            <person name="Homan T."/>
            <person name="Horio T."/>
            <person name="Horiuchi H."/>
            <person name="James S."/>
            <person name="Jones M."/>
            <person name="Karaffa L."/>
            <person name="Karanyi Z."/>
            <person name="Kato M."/>
            <person name="Keller N."/>
            <person name="Kelly D.E."/>
            <person name="Kiel J.A."/>
            <person name="Kim J.M."/>
            <person name="van der Klei I.J."/>
            <person name="Klis F.M."/>
            <person name="Kovalchuk A."/>
            <person name="Krasevec N."/>
            <person name="Kubicek C.P."/>
            <person name="Liu B."/>
            <person name="Maccabe A."/>
            <person name="Meyer V."/>
            <person name="Mirabito P."/>
            <person name="Miskei M."/>
            <person name="Mos M."/>
            <person name="Mullins J."/>
            <person name="Nelson D.R."/>
            <person name="Nielsen J."/>
            <person name="Oakley B.R."/>
            <person name="Osmani S.A."/>
            <person name="Pakula T."/>
            <person name="Paszewski A."/>
            <person name="Paulsen I."/>
            <person name="Pilsyk S."/>
            <person name="Pocsi I."/>
            <person name="Punt P.J."/>
            <person name="Ram A.F."/>
            <person name="Ren Q."/>
            <person name="Robellet X."/>
            <person name="Robson G."/>
            <person name="Seiboth B."/>
            <person name="van Solingen P."/>
            <person name="Specht T."/>
            <person name="Sun J."/>
            <person name="Taheri-Talesh N."/>
            <person name="Takeshita N."/>
            <person name="Ussery D."/>
            <person name="vanKuyk P.A."/>
            <person name="Visser H."/>
            <person name="van de Vondervoort P.J."/>
            <person name="de Vries R.P."/>
            <person name="Walton J."/>
            <person name="Xiang X."/>
            <person name="Xiong Y."/>
            <person name="Zeng A.P."/>
            <person name="Brandt B.W."/>
            <person name="Cornell M.J."/>
            <person name="van den Hondel C.A."/>
            <person name="Visser J."/>
            <person name="Oliver S.G."/>
            <person name="Turner G."/>
        </authorList>
    </citation>
    <scope>GENOME REANNOTATION</scope>
    <source>
        <strain>FGSC A4 / ATCC 38163 / CBS 112.46 / NRRL 194 / M139</strain>
    </source>
</reference>